<accession>Q60BG5</accession>
<protein>
    <recommendedName>
        <fullName evidence="1">Probable inorganic carbon transporter subunit DabA</fullName>
    </recommendedName>
</protein>
<evidence type="ECO:0000255" key="1">
    <source>
        <dbReference type="HAMAP-Rule" id="MF_01871"/>
    </source>
</evidence>
<gene>
    <name evidence="1" type="primary">dabA</name>
    <name type="ordered locus">MCA0512</name>
</gene>
<feature type="chain" id="PRO_0000387276" description="Probable inorganic carbon transporter subunit DabA">
    <location>
        <begin position="1"/>
        <end position="1073"/>
    </location>
</feature>
<feature type="binding site" evidence="1">
    <location>
        <position position="551"/>
    </location>
    <ligand>
        <name>Zn(2+)</name>
        <dbReference type="ChEBI" id="CHEBI:29105"/>
    </ligand>
</feature>
<feature type="binding site" evidence="1">
    <location>
        <position position="553"/>
    </location>
    <ligand>
        <name>Zn(2+)</name>
        <dbReference type="ChEBI" id="CHEBI:29105"/>
    </ligand>
</feature>
<feature type="binding site" evidence="1">
    <location>
        <position position="742"/>
    </location>
    <ligand>
        <name>Zn(2+)</name>
        <dbReference type="ChEBI" id="CHEBI:29105"/>
    </ligand>
</feature>
<feature type="binding site" evidence="1">
    <location>
        <position position="757"/>
    </location>
    <ligand>
        <name>Zn(2+)</name>
        <dbReference type="ChEBI" id="CHEBI:29105"/>
    </ligand>
</feature>
<reference key="1">
    <citation type="journal article" date="2004" name="PLoS Biol.">
        <title>Genomic insights into methanotrophy: the complete genome sequence of Methylococcus capsulatus (Bath).</title>
        <authorList>
            <person name="Ward N.L."/>
            <person name="Larsen O."/>
            <person name="Sakwa J."/>
            <person name="Bruseth L."/>
            <person name="Khouri H.M."/>
            <person name="Durkin A.S."/>
            <person name="Dimitrov G."/>
            <person name="Jiang L."/>
            <person name="Scanlan D."/>
            <person name="Kang K.H."/>
            <person name="Lewis M.R."/>
            <person name="Nelson K.E."/>
            <person name="Methe B.A."/>
            <person name="Wu M."/>
            <person name="Heidelberg J.F."/>
            <person name="Paulsen I.T."/>
            <person name="Fouts D.E."/>
            <person name="Ravel J."/>
            <person name="Tettelin H."/>
            <person name="Ren Q."/>
            <person name="Read T.D."/>
            <person name="DeBoy R.T."/>
            <person name="Seshadri R."/>
            <person name="Salzberg S.L."/>
            <person name="Jensen H.B."/>
            <person name="Birkeland N.K."/>
            <person name="Nelson W.C."/>
            <person name="Dodson R.J."/>
            <person name="Grindhaug S.H."/>
            <person name="Holt I.E."/>
            <person name="Eidhammer I."/>
            <person name="Jonasen I."/>
            <person name="Vanaken S."/>
            <person name="Utterback T.R."/>
            <person name="Feldblyum T.V."/>
            <person name="Fraser C.M."/>
            <person name="Lillehaug J.R."/>
            <person name="Eisen J.A."/>
        </authorList>
    </citation>
    <scope>NUCLEOTIDE SEQUENCE [LARGE SCALE GENOMIC DNA]</scope>
    <source>
        <strain>ATCC 33009 / NCIMB 11132 / Bath</strain>
    </source>
</reference>
<organism>
    <name type="scientific">Methylococcus capsulatus (strain ATCC 33009 / NCIMB 11132 / Bath)</name>
    <dbReference type="NCBI Taxonomy" id="243233"/>
    <lineage>
        <taxon>Bacteria</taxon>
        <taxon>Pseudomonadati</taxon>
        <taxon>Pseudomonadota</taxon>
        <taxon>Gammaproteobacteria</taxon>
        <taxon>Methylococcales</taxon>
        <taxon>Methylococcaceae</taxon>
        <taxon>Methylococcus</taxon>
    </lineage>
</organism>
<proteinExistence type="inferred from homology"/>
<keyword id="KW-0997">Cell inner membrane</keyword>
<keyword id="KW-1003">Cell membrane</keyword>
<keyword id="KW-0472">Membrane</keyword>
<keyword id="KW-0479">Metal-binding</keyword>
<keyword id="KW-1185">Reference proteome</keyword>
<keyword id="KW-0813">Transport</keyword>
<keyword id="KW-0862">Zinc</keyword>
<sequence length="1073" mass="119038">MEHVLPGQAPIRDFVHHNTLHGFQHLPFAAALEEAERLTGIRGYLPENEFRALHRKGRIDDADIDTVLDRHLGAAGEEILAVAGGEPVTRRQIHRLRLTVDLEPVDPARFTWLVDELEALDRFDPEVSPEARRRLMESAKRGRGEAVASRRLVRDLWDACLERLGLGDYTASHPEDLLGHAIAHAEALYADFKAESSGGGLSVSHRAMREEARALLAEEIDAVGREQTLRGFILKLTGQDVLDRVRPQLIRHCASHLDEGLAAWHSPDRSLGFYAAWKRSMRHGAEGGLGEVPLGHAELDALPDDPAEVVVFELEQRGIPLPYWEGYLERLALELPGWSGMMNWRAHRPLYRANRTAPVSLMDYLAVRLILDRRYLGRICSETWGIGGHIGELARYFEAHLSEFVVRHALYCGDLPEFLAATCADLVRRAGCERVDRKPWRVAADMIFSWRHAPGAGRDLRIRLHGSGWRLFKLAQHLGLSAHDVQALSASEIERLLCALDELTPAQRGYLWLCAYERHYREPLFNALASNHGRGRWATRDERPQAQIVFCMDDREEGVRRHLEELNPAVETLGAAGFFGIPMYWQGLDDAEPSALCPIVVIPSHEVREVPRPGEEAARRLHDHRRGVVRLLGRVFNQEIRRNLLSSHLLIDLVAPGVAVGLIAKVLLPRWAATLSRWLADLWMPEVPTTLALHAADDAAPAGPEQPRPGLTDAEQADRVAAFLLNIGLTQGFAPIVVLMGHGSASRNNPHLAAYDCGACSGRHGGPNARVFAAMANRPQVREQLAQRGLVVPADTWFVGAEHNTCSEEITWFDVQDIPPLSRIGWHAFAAQLDEACRLSAQERCRRFASAPRRPSPARALRHVSTRSVDFSQARPELGHATNAAALIGRRSVSRGLFLDRRVFLISYDPTRDPEGRILEGILLAAGPVGAGINLEYYFSTVNNERHGCGSKVAHNVTGLFGIMEGAASDLRTGLPRQMAEVHEAMRLQVVVEQTPEILAAIYRRQPPIRELVGNGWILLSAIDPGDGTISVFDPERGFVPWAGAATDMALCGRSTDWFEGHVEPLAPALIAV</sequence>
<dbReference type="EMBL" id="AE017282">
    <property type="protein sequence ID" value="AAU93299.1"/>
    <property type="molecule type" value="Genomic_DNA"/>
</dbReference>
<dbReference type="STRING" id="243233.MCA0512"/>
<dbReference type="KEGG" id="mca:MCA0512"/>
<dbReference type="eggNOG" id="COG3002">
    <property type="taxonomic scope" value="Bacteria"/>
</dbReference>
<dbReference type="HOGENOM" id="CLU_009885_0_0_6"/>
<dbReference type="Proteomes" id="UP000006821">
    <property type="component" value="Chromosome"/>
</dbReference>
<dbReference type="GO" id="GO:0005886">
    <property type="term" value="C:plasma membrane"/>
    <property type="evidence" value="ECO:0007669"/>
    <property type="project" value="UniProtKB-SubCell"/>
</dbReference>
<dbReference type="GO" id="GO:0008270">
    <property type="term" value="F:zinc ion binding"/>
    <property type="evidence" value="ECO:0007669"/>
    <property type="project" value="UniProtKB-UniRule"/>
</dbReference>
<dbReference type="HAMAP" id="MF_01871">
    <property type="entry name" value="DabA"/>
    <property type="match status" value="1"/>
</dbReference>
<dbReference type="InterPro" id="IPR018752">
    <property type="entry name" value="DabA"/>
</dbReference>
<dbReference type="PANTHER" id="PTHR38344:SF1">
    <property type="entry name" value="INORGANIC CARBON TRANSPORTER SUBUNIT DABA-RELATED"/>
    <property type="match status" value="1"/>
</dbReference>
<dbReference type="PANTHER" id="PTHR38344">
    <property type="entry name" value="UPF0753 PROTEIN AQ_863"/>
    <property type="match status" value="1"/>
</dbReference>
<dbReference type="Pfam" id="PF10070">
    <property type="entry name" value="DabA"/>
    <property type="match status" value="1"/>
</dbReference>
<comment type="function">
    <text evidence="1">Part of an energy-coupled inorganic carbon pump.</text>
</comment>
<comment type="cofactor">
    <cofactor evidence="1">
        <name>Zn(2+)</name>
        <dbReference type="ChEBI" id="CHEBI:29105"/>
    </cofactor>
</comment>
<comment type="subunit">
    <text evidence="1">Forms a complex with DabB.</text>
</comment>
<comment type="subcellular location">
    <subcellularLocation>
        <location evidence="1">Cell inner membrane</location>
        <topology evidence="1">Peripheral membrane protein</topology>
    </subcellularLocation>
</comment>
<comment type="similarity">
    <text evidence="1">Belongs to the inorganic carbon transporter (TC 9.A.2) DabA family.</text>
</comment>
<name>DABA_METCA</name>